<reference key="1">
    <citation type="journal article" date="1992" name="Nature">
        <title>The complete DNA sequence of yeast chromosome III.</title>
        <authorList>
            <person name="Oliver S.G."/>
            <person name="van der Aart Q.J.M."/>
            <person name="Agostoni-Carbone M.L."/>
            <person name="Aigle M."/>
            <person name="Alberghina L."/>
            <person name="Alexandraki D."/>
            <person name="Antoine G."/>
            <person name="Anwar R."/>
            <person name="Ballesta J.P.G."/>
            <person name="Benit P."/>
            <person name="Berben G."/>
            <person name="Bergantino E."/>
            <person name="Biteau N."/>
            <person name="Bolle P.-A."/>
            <person name="Bolotin-Fukuhara M."/>
            <person name="Brown A."/>
            <person name="Brown A.J.P."/>
            <person name="Buhler J.-M."/>
            <person name="Carcano C."/>
            <person name="Carignani G."/>
            <person name="Cederberg H."/>
            <person name="Chanet R."/>
            <person name="Contreras R."/>
            <person name="Crouzet M."/>
            <person name="Daignan-Fornier B."/>
            <person name="Defoor E."/>
            <person name="Delgado M.D."/>
            <person name="Demolder J."/>
            <person name="Doira C."/>
            <person name="Dubois E."/>
            <person name="Dujon B."/>
            <person name="Duesterhoeft A."/>
            <person name="Erdmann D."/>
            <person name="Esteban M."/>
            <person name="Fabre F."/>
            <person name="Fairhead C."/>
            <person name="Faye G."/>
            <person name="Feldmann H."/>
            <person name="Fiers W."/>
            <person name="Francingues-Gaillard M.-C."/>
            <person name="Franco L."/>
            <person name="Frontali L."/>
            <person name="Fukuhara H."/>
            <person name="Fuller L.J."/>
            <person name="Galland P."/>
            <person name="Gent M.E."/>
            <person name="Gigot D."/>
            <person name="Gilliquet V."/>
            <person name="Glansdorff N."/>
            <person name="Goffeau A."/>
            <person name="Grenson M."/>
            <person name="Grisanti P."/>
            <person name="Grivell L.A."/>
            <person name="de Haan M."/>
            <person name="Haasemann M."/>
            <person name="Hatat D."/>
            <person name="Hoenicka J."/>
            <person name="Hegemann J.H."/>
            <person name="Herbert C.J."/>
            <person name="Hilger F."/>
            <person name="Hohmann S."/>
            <person name="Hollenberg C.P."/>
            <person name="Huse K."/>
            <person name="Iborra F."/>
            <person name="Indge K.J."/>
            <person name="Isono K."/>
            <person name="Jacq C."/>
            <person name="Jacquet M."/>
            <person name="James C.M."/>
            <person name="Jauniaux J.-C."/>
            <person name="Jia Y."/>
            <person name="Jimenez A."/>
            <person name="Kelly A."/>
            <person name="Kleinhans U."/>
            <person name="Kreisl P."/>
            <person name="Lanfranchi G."/>
            <person name="Lewis C."/>
            <person name="van der Linden C.G."/>
            <person name="Lucchini G."/>
            <person name="Lutzenkirchen K."/>
            <person name="Maat M.J."/>
            <person name="Mallet L."/>
            <person name="Mannhaupt G."/>
            <person name="Martegani E."/>
            <person name="Mathieu A."/>
            <person name="Maurer C.T.C."/>
            <person name="McConnell D."/>
            <person name="McKee R.A."/>
            <person name="Messenguy F."/>
            <person name="Mewes H.-W."/>
            <person name="Molemans F."/>
            <person name="Montague M.A."/>
            <person name="Muzi Falconi M."/>
            <person name="Navas L."/>
            <person name="Newlon C.S."/>
            <person name="Noone D."/>
            <person name="Pallier C."/>
            <person name="Panzeri L."/>
            <person name="Pearson B.M."/>
            <person name="Perea J."/>
            <person name="Philippsen P."/>
            <person name="Pierard A."/>
            <person name="Planta R.J."/>
            <person name="Plevani P."/>
            <person name="Poetsch B."/>
            <person name="Pohl F.M."/>
            <person name="Purnelle B."/>
            <person name="Ramezani Rad M."/>
            <person name="Rasmussen S.W."/>
            <person name="Raynal A."/>
            <person name="Remacha M.A."/>
            <person name="Richterich P."/>
            <person name="Roberts A.B."/>
            <person name="Rodriguez F."/>
            <person name="Sanz E."/>
            <person name="Schaaff-Gerstenschlaeger I."/>
            <person name="Scherens B."/>
            <person name="Schweitzer B."/>
            <person name="Shu Y."/>
            <person name="Skala J."/>
            <person name="Slonimski P.P."/>
            <person name="Sor F."/>
            <person name="Soustelle C."/>
            <person name="Spiegelberg R."/>
            <person name="Stateva L.I."/>
            <person name="Steensma H.Y."/>
            <person name="Steiner S."/>
            <person name="Thierry A."/>
            <person name="Thireos G."/>
            <person name="Tzermia M."/>
            <person name="Urrestarazu L.A."/>
            <person name="Valle G."/>
            <person name="Vetter I."/>
            <person name="van Vliet-Reedijk J.C."/>
            <person name="Voet M."/>
            <person name="Volckaert G."/>
            <person name="Vreken P."/>
            <person name="Wang H."/>
            <person name="Warmington J.R."/>
            <person name="von Wettstein D."/>
            <person name="Wicksteed B.L."/>
            <person name="Wilson C."/>
            <person name="Wurst H."/>
            <person name="Xu G."/>
            <person name="Yoshikawa A."/>
            <person name="Zimmermann F.K."/>
            <person name="Sgouros J.G."/>
        </authorList>
    </citation>
    <scope>NUCLEOTIDE SEQUENCE [LARGE SCALE GENOMIC DNA]</scope>
    <source>
        <strain>ATCC 204508 / S288c</strain>
    </source>
</reference>
<reference key="2">
    <citation type="journal article" date="2014" name="G3 (Bethesda)">
        <title>The reference genome sequence of Saccharomyces cerevisiae: Then and now.</title>
        <authorList>
            <person name="Engel S.R."/>
            <person name="Dietrich F.S."/>
            <person name="Fisk D.G."/>
            <person name="Binkley G."/>
            <person name="Balakrishnan R."/>
            <person name="Costanzo M.C."/>
            <person name="Dwight S.S."/>
            <person name="Hitz B.C."/>
            <person name="Karra K."/>
            <person name="Nash R.S."/>
            <person name="Weng S."/>
            <person name="Wong E.D."/>
            <person name="Lloyd P."/>
            <person name="Skrzypek M.S."/>
            <person name="Miyasato S.R."/>
            <person name="Simison M."/>
            <person name="Cherry J.M."/>
        </authorList>
    </citation>
    <scope>GENOME REANNOTATION</scope>
    <source>
        <strain>ATCC 204508 / S288c</strain>
    </source>
</reference>
<reference key="3">
    <citation type="journal article" date="2007" name="Genome Res.">
        <title>Approaching a complete repository of sequence-verified protein-encoding clones for Saccharomyces cerevisiae.</title>
        <authorList>
            <person name="Hu Y."/>
            <person name="Rolfs A."/>
            <person name="Bhullar B."/>
            <person name="Murthy T.V.S."/>
            <person name="Zhu C."/>
            <person name="Berger M.F."/>
            <person name="Camargo A.A."/>
            <person name="Kelley F."/>
            <person name="McCarron S."/>
            <person name="Jepson D."/>
            <person name="Richardson A."/>
            <person name="Raphael J."/>
            <person name="Moreira D."/>
            <person name="Taycher E."/>
            <person name="Zuo D."/>
            <person name="Mohr S."/>
            <person name="Kane M.F."/>
            <person name="Williamson J."/>
            <person name="Simpson A.J.G."/>
            <person name="Bulyk M.L."/>
            <person name="Harlow E."/>
            <person name="Marsischky G."/>
            <person name="Kolodner R.D."/>
            <person name="LaBaer J."/>
        </authorList>
    </citation>
    <scope>NUCLEOTIDE SEQUENCE [GENOMIC DNA]</scope>
    <source>
        <strain>ATCC 204508 / S288c</strain>
    </source>
</reference>
<reference key="4">
    <citation type="journal article" date="1992" name="Protein Sci.">
        <title>Comprehensive sequence analysis of the 182 predicted open reading frames of yeast chromosome III.</title>
        <authorList>
            <person name="Bork P."/>
            <person name="Ouzounis C."/>
            <person name="Sander C."/>
            <person name="Scharf M."/>
            <person name="Schneider R."/>
            <person name="Sonnhammer E."/>
        </authorList>
    </citation>
    <scope>SIMILARITY TO METHYLTRANSFERASES</scope>
</reference>
<reference key="5">
    <citation type="journal article" date="1999" name="J. Biol. Chem.">
        <title>S-adenosylmethionine-dependent methylation in Saccharomyces cerevisiae. Identification of a novel protein arginine methyltransferase.</title>
        <authorList>
            <person name="Niewmierzycka A."/>
            <person name="Clarke S."/>
        </authorList>
    </citation>
    <scope>SIMILARITY TO METHYLTRANSFERASES</scope>
</reference>
<reference key="6">
    <citation type="journal article" date="2001" name="Mol. Biol. Cell">
        <title>A genomic study of the bipolar bud site selection pattern in Saccharomyces cerevisiae.</title>
        <authorList>
            <person name="Ni L."/>
            <person name="Snyder M."/>
        </authorList>
    </citation>
    <scope>FUNCTION</scope>
</reference>
<reference key="7">
    <citation type="journal article" date="2003" name="Mol. Cell. Proteomics">
        <title>Automated identification of putative methyltransferases from genomic open reading frames.</title>
        <authorList>
            <person name="Katz J.E."/>
            <person name="Dlakic M."/>
            <person name="Clarke S."/>
        </authorList>
    </citation>
    <scope>SIMILARITY TO METHYLTRANSFERASES</scope>
</reference>
<reference key="8">
    <citation type="journal article" date="2003" name="Nature">
        <title>Global analysis of protein localization in budding yeast.</title>
        <authorList>
            <person name="Huh W.-K."/>
            <person name="Falvo J.V."/>
            <person name="Gerke L.C."/>
            <person name="Carroll A.S."/>
            <person name="Howson R.W."/>
            <person name="Weissman J.S."/>
            <person name="O'Shea E.K."/>
        </authorList>
    </citation>
    <scope>SUBCELLULAR LOCATION [LARGE SCALE ANALYSIS]</scope>
</reference>
<reference key="9">
    <citation type="journal article" date="2003" name="Nature">
        <title>Global analysis of protein expression in yeast.</title>
        <authorList>
            <person name="Ghaemmaghami S."/>
            <person name="Huh W.-K."/>
            <person name="Bower K."/>
            <person name="Howson R.W."/>
            <person name="Belle A."/>
            <person name="Dephoure N."/>
            <person name="O'Shea E.K."/>
            <person name="Weissman J.S."/>
        </authorList>
    </citation>
    <scope>LEVEL OF PROTEIN EXPRESSION [LARGE SCALE ANALYSIS]</scope>
</reference>
<reference key="10">
    <citation type="journal article" date="2008" name="Mol. Cell. Biol.">
        <title>Bud23 methylates G1575 of 18S rRNA and is required for efficient nuclear export of pre-40S subunits.</title>
        <authorList>
            <person name="White J."/>
            <person name="Li Z."/>
            <person name="Sardana R."/>
            <person name="Bujnicki J.M."/>
            <person name="Marcotte E.M."/>
            <person name="Johnson A.W."/>
        </authorList>
    </citation>
    <scope>FUNCTION</scope>
    <scope>CATALYTIC ACTIVITY</scope>
    <scope>MUTAGENESIS OF GLY-57 AND ASP-77</scope>
</reference>
<reference key="11">
    <citation type="journal article" date="2012" name="Mol. Biol. Cell">
        <title>The methyltransferase adaptor protein Trm112 is involved in biogenesis of both ribosomal subunits.</title>
        <authorList>
            <person name="Sardana R."/>
            <person name="Johnson A.W."/>
        </authorList>
    </citation>
    <scope>FUNCTION</scope>
    <scope>INTERACTION WITH TRM112</scope>
</reference>
<reference key="12">
    <citation type="journal article" date="2012" name="Mol. Cell. Biol.">
        <title>Trm112 is required for Bud23-mediated methylation of the 18S rRNA at position G1575.</title>
        <authorList>
            <person name="Figaro S."/>
            <person name="Wacheul L."/>
            <person name="Schillewaert S."/>
            <person name="Graille M."/>
            <person name="Huvelle E."/>
            <person name="Mongeard R."/>
            <person name="Zorbas C."/>
            <person name="Lafontaine D.L."/>
            <person name="Heurgue-Hamard V."/>
        </authorList>
    </citation>
    <scope>FUNCTION</scope>
    <scope>INTERACTION WITH TRM112</scope>
</reference>
<reference key="13">
    <citation type="journal article" date="2012" name="Yeast">
        <title>New phenotypes generated by the G57R mutation of BUD23 in Saccharomyces cerevisiae.</title>
        <authorList>
            <person name="Lin J.L."/>
            <person name="Yu H.C."/>
            <person name="Chao J.L."/>
            <person name="Wang C."/>
            <person name="Cheng M.Y."/>
        </authorList>
    </citation>
    <scope>MUTAGENESIS OF GLY-57 AND ASP-77</scope>
</reference>
<reference key="14">
    <citation type="journal article" date="2013" name="RNA">
        <title>The rRNA methyltransferase Bud23 shows functional interaction with components of the SSU processome and RNase MRP.</title>
        <authorList>
            <person name="Sardana R."/>
            <person name="White J.P."/>
            <person name="Johnson A.W."/>
        </authorList>
    </citation>
    <scope>FUNCTION</scope>
</reference>
<reference key="15">
    <citation type="journal article" date="2014" name="Mol. Cell. Biol.">
        <title>Physical and functional interaction between the methyltransferase Bud23 and the essential DEAH-box RNA helicase Ecm16.</title>
        <authorList>
            <person name="Sardana R."/>
            <person name="Zhu J."/>
            <person name="Gill M."/>
            <person name="Johnson A.W."/>
        </authorList>
    </citation>
    <scope>FUNCTION</scope>
    <scope>INTERACTION WITH ECM16</scope>
</reference>
<gene>
    <name type="primary">BUD23</name>
    <name type="ordered locus">YCR047C</name>
    <name type="ORF">YCR47C</name>
</gene>
<dbReference type="EC" id="2.1.1.309" evidence="6"/>
<dbReference type="EMBL" id="X59720">
    <property type="protein sequence ID" value="CAA42295.1"/>
    <property type="molecule type" value="Genomic_DNA"/>
</dbReference>
<dbReference type="EMBL" id="AY692877">
    <property type="protein sequence ID" value="AAT92896.1"/>
    <property type="molecule type" value="Genomic_DNA"/>
</dbReference>
<dbReference type="EMBL" id="BK006937">
    <property type="protein sequence ID" value="DAA07525.1"/>
    <property type="molecule type" value="Genomic_DNA"/>
</dbReference>
<dbReference type="PIR" id="S19460">
    <property type="entry name" value="S19460"/>
</dbReference>
<dbReference type="RefSeq" id="NP_009976.1">
    <property type="nucleotide sequence ID" value="NM_001178761.1"/>
</dbReference>
<dbReference type="PDB" id="4QTT">
    <property type="method" value="X-ray"/>
    <property type="resolution" value="2.00 A"/>
    <property type="chains" value="B/D=1-202"/>
</dbReference>
<dbReference type="PDB" id="4QTU">
    <property type="method" value="X-ray"/>
    <property type="resolution" value="2.12 A"/>
    <property type="chains" value="B/D=1-202"/>
</dbReference>
<dbReference type="PDB" id="7WTN">
    <property type="method" value="EM"/>
    <property type="resolution" value="3.40 A"/>
    <property type="chains" value="CB=1-275"/>
</dbReference>
<dbReference type="PDB" id="7WTP">
    <property type="method" value="EM"/>
    <property type="resolution" value="3.80 A"/>
    <property type="chains" value="CB=1-275"/>
</dbReference>
<dbReference type="PDB" id="7WTQ">
    <property type="method" value="EM"/>
    <property type="resolution" value="3.70 A"/>
    <property type="chains" value="CB=1-275"/>
</dbReference>
<dbReference type="PDB" id="7WTR">
    <property type="method" value="EM"/>
    <property type="resolution" value="3.50 A"/>
    <property type="chains" value="CB=1-275"/>
</dbReference>
<dbReference type="PDBsum" id="4QTT"/>
<dbReference type="PDBsum" id="4QTU"/>
<dbReference type="PDBsum" id="7WTN"/>
<dbReference type="PDBsum" id="7WTP"/>
<dbReference type="PDBsum" id="7WTQ"/>
<dbReference type="PDBsum" id="7WTR"/>
<dbReference type="EMDB" id="EMD-32792"/>
<dbReference type="EMDB" id="EMD-32794"/>
<dbReference type="EMDB" id="EMD-32795"/>
<dbReference type="EMDB" id="EMD-32796"/>
<dbReference type="SMR" id="P25627"/>
<dbReference type="BioGRID" id="31029">
    <property type="interactions" value="108"/>
</dbReference>
<dbReference type="ComplexPortal" id="CPX-1047">
    <property type="entry name" value="BUD23-TRM112 methyltransferase complex"/>
</dbReference>
<dbReference type="DIP" id="DIP-4673N"/>
<dbReference type="FunCoup" id="P25627">
    <property type="interactions" value="1136"/>
</dbReference>
<dbReference type="IntAct" id="P25627">
    <property type="interactions" value="48"/>
</dbReference>
<dbReference type="MINT" id="P25627"/>
<dbReference type="STRING" id="4932.YCR047C"/>
<dbReference type="iPTMnet" id="P25627"/>
<dbReference type="PaxDb" id="4932-YCR047C"/>
<dbReference type="PeptideAtlas" id="P25627"/>
<dbReference type="EnsemblFungi" id="YCR047C_mRNA">
    <property type="protein sequence ID" value="YCR047C"/>
    <property type="gene ID" value="YCR047C"/>
</dbReference>
<dbReference type="GeneID" id="850414"/>
<dbReference type="KEGG" id="sce:YCR047C"/>
<dbReference type="AGR" id="SGD:S000000643"/>
<dbReference type="SGD" id="S000000643">
    <property type="gene designation" value="BUD23"/>
</dbReference>
<dbReference type="VEuPathDB" id="FungiDB:YCR047C"/>
<dbReference type="eggNOG" id="KOG1541">
    <property type="taxonomic scope" value="Eukaryota"/>
</dbReference>
<dbReference type="GeneTree" id="ENSGT00390000014737"/>
<dbReference type="HOGENOM" id="CLU_055194_0_2_1"/>
<dbReference type="InParanoid" id="P25627"/>
<dbReference type="OMA" id="WIQEKKE"/>
<dbReference type="OrthoDB" id="2877at2759"/>
<dbReference type="BioCyc" id="MetaCyc:G3O-29358-MONOMER"/>
<dbReference type="BioCyc" id="YEAST:G3O-29358-MONOMER"/>
<dbReference type="BRENDA" id="2.1.1.309">
    <property type="organism ID" value="984"/>
</dbReference>
<dbReference type="BioGRID-ORCS" id="850414">
    <property type="hits" value="6 hits in 10 CRISPR screens"/>
</dbReference>
<dbReference type="CD-CODE" id="BDAE0F88">
    <property type="entry name" value="Nucleolus"/>
</dbReference>
<dbReference type="EvolutionaryTrace" id="P25627"/>
<dbReference type="PRO" id="PR:P25627"/>
<dbReference type="Proteomes" id="UP000002311">
    <property type="component" value="Chromosome III"/>
</dbReference>
<dbReference type="RNAct" id="P25627">
    <property type="molecule type" value="protein"/>
</dbReference>
<dbReference type="GO" id="GO:0005737">
    <property type="term" value="C:cytoplasm"/>
    <property type="evidence" value="ECO:0007005"/>
    <property type="project" value="SGD"/>
</dbReference>
<dbReference type="GO" id="GO:0005730">
    <property type="term" value="C:nucleolus"/>
    <property type="evidence" value="ECO:0000314"/>
    <property type="project" value="SGD"/>
</dbReference>
<dbReference type="GO" id="GO:0005634">
    <property type="term" value="C:nucleus"/>
    <property type="evidence" value="ECO:0007005"/>
    <property type="project" value="SGD"/>
</dbReference>
<dbReference type="GO" id="GO:0043527">
    <property type="term" value="C:tRNA methyltransferase complex"/>
    <property type="evidence" value="ECO:0000353"/>
    <property type="project" value="ComplexPortal"/>
</dbReference>
<dbReference type="GO" id="GO:0016435">
    <property type="term" value="F:rRNA (guanine) methyltransferase activity"/>
    <property type="evidence" value="ECO:0000315"/>
    <property type="project" value="SGD"/>
</dbReference>
<dbReference type="GO" id="GO:0000447">
    <property type="term" value="P:endonucleolytic cleavage in ITS1 to separate SSU-rRNA from 5.8S rRNA and LSU-rRNA from tricistronic rRNA transcript (SSU-rRNA, 5.8S rRNA, LSU-rRNA)"/>
    <property type="evidence" value="ECO:0000315"/>
    <property type="project" value="SGD"/>
</dbReference>
<dbReference type="GO" id="GO:0000056">
    <property type="term" value="P:ribosomal small subunit export from nucleus"/>
    <property type="evidence" value="ECO:0000315"/>
    <property type="project" value="SGD"/>
</dbReference>
<dbReference type="GO" id="GO:0070476">
    <property type="term" value="P:rRNA (guanine-N7)-methylation"/>
    <property type="evidence" value="ECO:0000315"/>
    <property type="project" value="SGD"/>
</dbReference>
<dbReference type="CDD" id="cd02440">
    <property type="entry name" value="AdoMet_MTases"/>
    <property type="match status" value="1"/>
</dbReference>
<dbReference type="FunFam" id="3.40.50.150:FF:000017">
    <property type="entry name" value="probable 18S rRNA (Guanine-N(7))-methyltransferase"/>
    <property type="match status" value="1"/>
</dbReference>
<dbReference type="Gene3D" id="3.40.50.150">
    <property type="entry name" value="Vaccinia Virus protein VP39"/>
    <property type="match status" value="1"/>
</dbReference>
<dbReference type="InterPro" id="IPR039769">
    <property type="entry name" value="Bud23-like"/>
</dbReference>
<dbReference type="InterPro" id="IPR022238">
    <property type="entry name" value="Bud23_C"/>
</dbReference>
<dbReference type="InterPro" id="IPR013216">
    <property type="entry name" value="Methyltransf_11"/>
</dbReference>
<dbReference type="InterPro" id="IPR029063">
    <property type="entry name" value="SAM-dependent_MTases_sf"/>
</dbReference>
<dbReference type="PANTHER" id="PTHR12734:SF0">
    <property type="entry name" value="18S RRNA (GUANINE-N(7))-METHYLTRANSFERASE-RELATED"/>
    <property type="match status" value="1"/>
</dbReference>
<dbReference type="PANTHER" id="PTHR12734">
    <property type="entry name" value="METHYLTRANSFERASE-RELATED"/>
    <property type="match status" value="1"/>
</dbReference>
<dbReference type="Pfam" id="PF08241">
    <property type="entry name" value="Methyltransf_11"/>
    <property type="match status" value="1"/>
</dbReference>
<dbReference type="Pfam" id="PF12589">
    <property type="entry name" value="WBS_methylT"/>
    <property type="match status" value="1"/>
</dbReference>
<dbReference type="SUPFAM" id="SSF53335">
    <property type="entry name" value="S-adenosyl-L-methionine-dependent methyltransferases"/>
    <property type="match status" value="1"/>
</dbReference>
<comment type="function">
    <text evidence="3 6 7 8 10 11">S-adenosyl-L-methionine-dependent methyltransferase that specifically methylates the N(7) position of guanine 1575 (m7G1575) in 18S rRNA. Requires the methyltransferase adapter protein TRM112 for full rRNA methyltransferase activity. Important for biogenesis end export of the 40S ribosomal subunit independent on its methyltransferase activity. Required for efficient cleavage of the primary 35S precursor rRNA at site A2. Involved in positioning the proximal bud pole signal.</text>
</comment>
<comment type="catalytic activity">
    <reaction evidence="6">
        <text>guanosine(1575) in yeast 18S rRNA + S-adenosyl-L-methionine = N(7)-methylguanosine(1575) in yeast 18S rRNA + S-adenosyl-L-homocysteine</text>
        <dbReference type="Rhea" id="RHEA:43172"/>
        <dbReference type="Rhea" id="RHEA-COMP:10387"/>
        <dbReference type="Rhea" id="RHEA-COMP:10388"/>
        <dbReference type="ChEBI" id="CHEBI:57856"/>
        <dbReference type="ChEBI" id="CHEBI:59789"/>
        <dbReference type="ChEBI" id="CHEBI:74269"/>
        <dbReference type="ChEBI" id="CHEBI:74480"/>
        <dbReference type="EC" id="2.1.1.309"/>
    </reaction>
</comment>
<comment type="subunit">
    <text evidence="7 8 11">Interacts with TRM112. Interacts with ECM16.</text>
</comment>
<comment type="interaction">
    <interactant intactId="EBI-21924">
        <id>P25627</id>
    </interactant>
    <interactant intactId="EBI-28520">
        <id>P53738</id>
        <label>TRM112</label>
    </interactant>
    <organismsDiffer>false</organismsDiffer>
    <experiments>6</experiments>
</comment>
<comment type="subcellular location">
    <subcellularLocation>
        <location evidence="4">Cytoplasm</location>
    </subcellularLocation>
    <subcellularLocation>
        <location evidence="4">Nucleus</location>
    </subcellularLocation>
</comment>
<comment type="miscellaneous">
    <text evidence="5">Present with 1620 molecules/cell in log phase SD medium.</text>
</comment>
<comment type="similarity">
    <text evidence="12">Belongs to the class I-like SAM-binding methyltransferase superfamily. BUD23/WBSCR22 family.</text>
</comment>
<name>BUD23_YEAST</name>
<evidence type="ECO:0000255" key="1"/>
<evidence type="ECO:0000256" key="2">
    <source>
        <dbReference type="SAM" id="MobiDB-lite"/>
    </source>
</evidence>
<evidence type="ECO:0000269" key="3">
    <source>
    </source>
</evidence>
<evidence type="ECO:0000269" key="4">
    <source>
    </source>
</evidence>
<evidence type="ECO:0000269" key="5">
    <source>
    </source>
</evidence>
<evidence type="ECO:0000269" key="6">
    <source>
    </source>
</evidence>
<evidence type="ECO:0000269" key="7">
    <source>
    </source>
</evidence>
<evidence type="ECO:0000269" key="8">
    <source>
    </source>
</evidence>
<evidence type="ECO:0000269" key="9">
    <source>
    </source>
</evidence>
<evidence type="ECO:0000269" key="10">
    <source>
    </source>
</evidence>
<evidence type="ECO:0000269" key="11">
    <source>
    </source>
</evidence>
<evidence type="ECO:0000305" key="12"/>
<evidence type="ECO:0007829" key="13">
    <source>
        <dbReference type="PDB" id="4QTT"/>
    </source>
</evidence>
<evidence type="ECO:0007829" key="14">
    <source>
        <dbReference type="PDB" id="4QTU"/>
    </source>
</evidence>
<protein>
    <recommendedName>
        <fullName>18S rRNA (guanine(1575)-N(7))-methyltransferase</fullName>
        <ecNumber evidence="6">2.1.1.309</ecNumber>
    </recommendedName>
    <alternativeName>
        <fullName>Bud site selection protein 23</fullName>
    </alternativeName>
</protein>
<organism>
    <name type="scientific">Saccharomyces cerevisiae (strain ATCC 204508 / S288c)</name>
    <name type="common">Baker's yeast</name>
    <dbReference type="NCBI Taxonomy" id="559292"/>
    <lineage>
        <taxon>Eukaryota</taxon>
        <taxon>Fungi</taxon>
        <taxon>Dikarya</taxon>
        <taxon>Ascomycota</taxon>
        <taxon>Saccharomycotina</taxon>
        <taxon>Saccharomycetes</taxon>
        <taxon>Saccharomycetales</taxon>
        <taxon>Saccharomycetaceae</taxon>
        <taxon>Saccharomyces</taxon>
    </lineage>
</organism>
<feature type="chain" id="PRO_0000204459" description="18S rRNA (guanine(1575)-N(7))-methyltransferase">
    <location>
        <begin position="1"/>
        <end position="275"/>
    </location>
</feature>
<feature type="region of interest" description="Disordered" evidence="2">
    <location>
        <begin position="256"/>
        <end position="275"/>
    </location>
</feature>
<feature type="short sequence motif" description="Nuclear localization signal" evidence="1">
    <location>
        <begin position="257"/>
        <end position="264"/>
    </location>
</feature>
<feature type="mutagenesis site" description="Fails to ctalyze the N-7 methylation of the G1575 residue." evidence="6 9">
    <original>G</original>
    <variation>E</variation>
    <location>
        <position position="57"/>
    </location>
</feature>
<feature type="mutagenesis site" description="Can only partially restore the slow-growth phenotype and the random budding pattern of a null mutant." evidence="6 9">
    <original>G</original>
    <variation>R</variation>
    <location>
        <position position="57"/>
    </location>
</feature>
<feature type="mutagenesis site" description="No effect on growth and budding pattern." evidence="6 9">
    <original>D</original>
    <variation>A</variation>
    <location>
        <position position="77"/>
    </location>
</feature>
<feature type="mutagenesis site" description="Fails to ctalyze the N-7 methylation of the G1575 residue." evidence="6 9">
    <original>D</original>
    <variation>K</variation>
    <location>
        <position position="77"/>
    </location>
</feature>
<feature type="helix" evidence="14">
    <location>
        <begin position="16"/>
        <end position="24"/>
    </location>
</feature>
<feature type="helix" evidence="13">
    <location>
        <begin position="25"/>
        <end position="43"/>
    </location>
</feature>
<feature type="strand" evidence="13">
    <location>
        <begin position="50"/>
        <end position="54"/>
    </location>
</feature>
<feature type="helix" evidence="13">
    <location>
        <begin position="60"/>
        <end position="69"/>
    </location>
</feature>
<feature type="strand" evidence="13">
    <location>
        <begin position="72"/>
        <end position="78"/>
    </location>
</feature>
<feature type="helix" evidence="13">
    <location>
        <begin position="80"/>
        <end position="87"/>
    </location>
</feature>
<feature type="turn" evidence="13">
    <location>
        <begin position="88"/>
        <end position="90"/>
    </location>
</feature>
<feature type="strand" evidence="13">
    <location>
        <begin position="92"/>
        <end position="97"/>
    </location>
</feature>
<feature type="helix" evidence="13">
    <location>
        <begin position="100"/>
        <end position="102"/>
    </location>
</feature>
<feature type="strand" evidence="13">
    <location>
        <begin position="111"/>
        <end position="118"/>
    </location>
</feature>
<feature type="helix" evidence="13">
    <location>
        <begin position="120"/>
        <end position="124"/>
    </location>
</feature>
<feature type="helix" evidence="13">
    <location>
        <begin position="133"/>
        <end position="147"/>
    </location>
</feature>
<feature type="strand" evidence="13">
    <location>
        <begin position="148"/>
        <end position="158"/>
    </location>
</feature>
<feature type="helix" evidence="13">
    <location>
        <begin position="163"/>
        <end position="176"/>
    </location>
</feature>
<feature type="strand" evidence="13">
    <location>
        <begin position="179"/>
        <end position="186"/>
    </location>
</feature>
<feature type="turn" evidence="13">
    <location>
        <begin position="190"/>
        <end position="192"/>
    </location>
</feature>
<feature type="strand" evidence="13">
    <location>
        <begin position="194"/>
        <end position="200"/>
    </location>
</feature>
<keyword id="KW-0002">3D-structure</keyword>
<keyword id="KW-0963">Cytoplasm</keyword>
<keyword id="KW-0489">Methyltransferase</keyword>
<keyword id="KW-0539">Nucleus</keyword>
<keyword id="KW-1185">Reference proteome</keyword>
<keyword id="KW-0698">rRNA processing</keyword>
<keyword id="KW-0949">S-adenosyl-L-methionine</keyword>
<keyword id="KW-0808">Transferase</keyword>
<proteinExistence type="evidence at protein level"/>
<accession>P25627</accession>
<accession>D6VR56</accession>
<sequence length="275" mass="30742">MSRPEELAPPEIFYNDSEAHKYTGSTRVQHIQAKMTLRALELLNLQPCSFILDIGCGSGLSGEILTQEGDHVWCGLDISPSMLATGLSRELEGDLMLQDMGTGIPFRAGSFDAAISISAIQWLCNADTSYNDPKQRLMRFFNTLYAALKKGGKFVAQFYPKNDDQVDDILQSAKVAGFSGGLVVDDPESKKNKKYYLVLSSGAPPQGEEQVNLDGVTMDEENVNLKKQLRQRLKGGKDKESAKSFILRKKELMKRRGRKVAKDSKFTGRKRRHRF</sequence>